<name>INH_PSETO</name>
<keyword id="KW-0481">Metalloenzyme inhibitor</keyword>
<keyword id="KW-0483">Metalloprotease inhibitor</keyword>
<keyword id="KW-0574">Periplasm</keyword>
<keyword id="KW-0646">Protease inhibitor</keyword>
<keyword id="KW-0732">Signal</keyword>
<comment type="function">
    <text evidence="1">Inhibitor of the alkaline protease.</text>
</comment>
<comment type="subcellular location">
    <subcellularLocation>
        <location evidence="1">Periplasm</location>
    </subcellularLocation>
</comment>
<comment type="similarity">
    <text evidence="4">Belongs to the protease inhibitor I38 family.</text>
</comment>
<accession>O87807</accession>
<proteinExistence type="inferred from homology"/>
<evidence type="ECO:0000250" key="1"/>
<evidence type="ECO:0000255" key="2"/>
<evidence type="ECO:0000256" key="3">
    <source>
        <dbReference type="SAM" id="MobiDB-lite"/>
    </source>
</evidence>
<evidence type="ECO:0000305" key="4"/>
<feature type="signal peptide" evidence="2">
    <location>
        <begin position="1"/>
        <end position="25"/>
    </location>
</feature>
<feature type="chain" id="PRO_0000026720" description="Alkaline proteinase inhibitor">
    <location>
        <begin position="26"/>
        <end position="122"/>
    </location>
</feature>
<feature type="region of interest" description="Disordered" evidence="3">
    <location>
        <begin position="101"/>
        <end position="122"/>
    </location>
</feature>
<reference key="1">
    <citation type="submission" date="1998-07" db="EMBL/GenBank/DDBJ databases">
        <title>Characterisation of a gene cluster required for synthesis and secretion of extracellular metalloprotease by Pseudomonas tolaasii.</title>
        <authorList>
            <person name="Han B."/>
            <person name="Johnstone K."/>
        </authorList>
    </citation>
    <scope>NUCLEOTIDE SEQUENCE [GENOMIC DNA]</scope>
    <source>
        <strain>1116S</strain>
    </source>
</reference>
<sequence>MPRFSHLIGCVWQVLFVSAGAQAMASSFVVPSTAQMAGQLGIEATGSGVCAGPAEQANALAGDVACAEQWLGDKPVSWSPTPDGIWLMNAEGTGITHLNRQKEGEYTGRTPSGADVTLQRTN</sequence>
<dbReference type="EMBL" id="AJ007827">
    <property type="protein sequence ID" value="CAA07698.1"/>
    <property type="molecule type" value="Genomic_DNA"/>
</dbReference>
<dbReference type="SMR" id="O87807"/>
<dbReference type="MEROPS" id="I38.001"/>
<dbReference type="GO" id="GO:0042597">
    <property type="term" value="C:periplasmic space"/>
    <property type="evidence" value="ECO:0007669"/>
    <property type="project" value="UniProtKB-SubCell"/>
</dbReference>
<dbReference type="GO" id="GO:0008191">
    <property type="term" value="F:metalloendopeptidase inhibitor activity"/>
    <property type="evidence" value="ECO:0007669"/>
    <property type="project" value="InterPro"/>
</dbReference>
<dbReference type="Gene3D" id="2.40.128.10">
    <property type="match status" value="1"/>
</dbReference>
<dbReference type="InterPro" id="IPR022815">
    <property type="entry name" value="Inh"/>
</dbReference>
<dbReference type="InterPro" id="IPR021140">
    <property type="entry name" value="Inh/Omp19"/>
</dbReference>
<dbReference type="InterPro" id="IPR016085">
    <property type="entry name" value="Protease_inh_b-brl_dom"/>
</dbReference>
<dbReference type="Pfam" id="PF02974">
    <property type="entry name" value="Inh"/>
    <property type="match status" value="1"/>
</dbReference>
<dbReference type="PRINTS" id="PR01274">
    <property type="entry name" value="MPTASEINHBTR"/>
</dbReference>
<dbReference type="SUPFAM" id="SSF50882">
    <property type="entry name" value="beta-Barrel protease inhibitors"/>
    <property type="match status" value="1"/>
</dbReference>
<organism>
    <name type="scientific">Pseudomonas tolaasii</name>
    <dbReference type="NCBI Taxonomy" id="29442"/>
    <lineage>
        <taxon>Bacteria</taxon>
        <taxon>Pseudomonadati</taxon>
        <taxon>Pseudomonadota</taxon>
        <taxon>Gammaproteobacteria</taxon>
        <taxon>Pseudomonadales</taxon>
        <taxon>Pseudomonadaceae</taxon>
        <taxon>Pseudomonas</taxon>
    </lineage>
</organism>
<protein>
    <recommendedName>
        <fullName>Alkaline proteinase inhibitor</fullName>
    </recommendedName>
</protein>
<gene>
    <name type="primary">inh</name>
    <name type="synonym">eprI</name>
</gene>